<proteinExistence type="inferred from homology"/>
<evidence type="ECO:0000250" key="1"/>
<evidence type="ECO:0000305" key="2"/>
<comment type="function">
    <text evidence="1">DNA helicase which participates in several chromatin remodeling complexes, including the SWR1 and the INO80 complexes. The SWR1 complex mediates the ATP-dependent exchange of histone H2A for the H2A variant H2A.Z leading to transcriptional regulation of selected genes by chromatin remodeling. The INO80 complex remodels chromatin by shifting nucleosomes and is involved in DNA repair. Also involved in pre-rRNA processing (By similarity).</text>
</comment>
<comment type="catalytic activity">
    <reaction>
        <text>ATP + H2O = ADP + phosphate + H(+)</text>
        <dbReference type="Rhea" id="RHEA:13065"/>
        <dbReference type="ChEBI" id="CHEBI:15377"/>
        <dbReference type="ChEBI" id="CHEBI:15378"/>
        <dbReference type="ChEBI" id="CHEBI:30616"/>
        <dbReference type="ChEBI" id="CHEBI:43474"/>
        <dbReference type="ChEBI" id="CHEBI:456216"/>
        <dbReference type="EC" id="3.6.4.12"/>
    </reaction>
</comment>
<comment type="subunit">
    <text evidence="1">May form heterododecamers with hel-2/rvb2. Component of the SWR1 chromatin remodeling complex, the INO80 chromatin remodeling complex, and of the R2TP complex (By similarity).</text>
</comment>
<comment type="subcellular location">
    <subcellularLocation>
        <location evidence="1">Nucleus</location>
    </subcellularLocation>
</comment>
<comment type="similarity">
    <text evidence="2">Belongs to the RuvB family.</text>
</comment>
<feature type="chain" id="PRO_0000165657" description="RuvB-like helicase 1">
    <location>
        <begin position="1"/>
        <end position="458"/>
    </location>
</feature>
<feature type="binding site" evidence="1">
    <location>
        <begin position="71"/>
        <end position="78"/>
    </location>
    <ligand>
        <name>ATP</name>
        <dbReference type="ChEBI" id="CHEBI:30616"/>
    </ligand>
</feature>
<name>RUVB1_NEUCR</name>
<accession>Q8WZS3</accession>
<accession>Q1K4L8</accession>
<gene>
    <name type="primary">hel-1</name>
    <name type="synonym">rvb1</name>
    <name type="ORF">B8L21.150</name>
    <name type="ORF">NCU03482</name>
</gene>
<organism>
    <name type="scientific">Neurospora crassa (strain ATCC 24698 / 74-OR23-1A / CBS 708.71 / DSM 1257 / FGSC 987)</name>
    <dbReference type="NCBI Taxonomy" id="367110"/>
    <lineage>
        <taxon>Eukaryota</taxon>
        <taxon>Fungi</taxon>
        <taxon>Dikarya</taxon>
        <taxon>Ascomycota</taxon>
        <taxon>Pezizomycotina</taxon>
        <taxon>Sordariomycetes</taxon>
        <taxon>Sordariomycetidae</taxon>
        <taxon>Sordariales</taxon>
        <taxon>Sordariaceae</taxon>
        <taxon>Neurospora</taxon>
    </lineage>
</organism>
<keyword id="KW-0010">Activator</keyword>
<keyword id="KW-0067">ATP-binding</keyword>
<keyword id="KW-0156">Chromatin regulator</keyword>
<keyword id="KW-0227">DNA damage</keyword>
<keyword id="KW-0234">DNA repair</keyword>
<keyword id="KW-0347">Helicase</keyword>
<keyword id="KW-0378">Hydrolase</keyword>
<keyword id="KW-0547">Nucleotide-binding</keyword>
<keyword id="KW-0539">Nucleus</keyword>
<keyword id="KW-1185">Reference proteome</keyword>
<keyword id="KW-0804">Transcription</keyword>
<keyword id="KW-0805">Transcription regulation</keyword>
<protein>
    <recommendedName>
        <fullName>RuvB-like helicase 1</fullName>
        <ecNumber>3.6.4.12</ecNumber>
    </recommendedName>
</protein>
<sequence length="458" mass="49811">MVQISEVKGNSRDNRTAAHTHIKGLGLNSQGIAEKQASGFVGQTTAREACGVVVDLIKAHKMAGRGVLLAGGPGTGKTALALAISQELGTKIPFCPITGSEIYSTEVKKTEVLMENFRRAIGLKVRETKEVYEGEVTELTPEEAENPLGGYGKTITTLLIGLKSAKGQKKLRLDPSIYEAIQKERVTVGDVIYIEANTGACKRVGRSDAYATEFDLEAEEYVPIPKGEVHKKKEIVQDVSLHDLDVANARPQGGQDIMSMMGQLMKPKMTEITDKLRSEINKVVSKYIDQGVAELVPGVLFIDEAHMLDVECFTYLNKALESPISPIVVLASNRGMTGIRGAEDLVAAHGIPPDFLSRLLIIPTTAYDPEEIKRIVKIRSTTEGVKITEAAIDKIAEHGVRISLRYCLQLLTPASILAKVNGRNEIDVQDVAECEDLFLDARRSAALLSSEQGQEFIC</sequence>
<reference key="1">
    <citation type="journal article" date="2003" name="Nucleic Acids Res.">
        <title>What's in the genome of a filamentous fungus? Analysis of the Neurospora genome sequence.</title>
        <authorList>
            <person name="Mannhaupt G."/>
            <person name="Montrone C."/>
            <person name="Haase D."/>
            <person name="Mewes H.-W."/>
            <person name="Aign V."/>
            <person name="Hoheisel J.D."/>
            <person name="Fartmann B."/>
            <person name="Nyakatura G."/>
            <person name="Kempken F."/>
            <person name="Maier J."/>
            <person name="Schulte U."/>
        </authorList>
    </citation>
    <scope>NUCLEOTIDE SEQUENCE [LARGE SCALE GENOMIC DNA]</scope>
    <source>
        <strain>ATCC 24698 / 74-OR23-1A / CBS 708.71 / DSM 1257 / FGSC 987</strain>
    </source>
</reference>
<reference key="2">
    <citation type="journal article" date="2003" name="Nature">
        <title>The genome sequence of the filamentous fungus Neurospora crassa.</title>
        <authorList>
            <person name="Galagan J.E."/>
            <person name="Calvo S.E."/>
            <person name="Borkovich K.A."/>
            <person name="Selker E.U."/>
            <person name="Read N.D."/>
            <person name="Jaffe D.B."/>
            <person name="FitzHugh W."/>
            <person name="Ma L.-J."/>
            <person name="Smirnov S."/>
            <person name="Purcell S."/>
            <person name="Rehman B."/>
            <person name="Elkins T."/>
            <person name="Engels R."/>
            <person name="Wang S."/>
            <person name="Nielsen C.B."/>
            <person name="Butler J."/>
            <person name="Endrizzi M."/>
            <person name="Qui D."/>
            <person name="Ianakiev P."/>
            <person name="Bell-Pedersen D."/>
            <person name="Nelson M.A."/>
            <person name="Werner-Washburne M."/>
            <person name="Selitrennikoff C.P."/>
            <person name="Kinsey J.A."/>
            <person name="Braun E.L."/>
            <person name="Zelter A."/>
            <person name="Schulte U."/>
            <person name="Kothe G.O."/>
            <person name="Jedd G."/>
            <person name="Mewes H.-W."/>
            <person name="Staben C."/>
            <person name="Marcotte E."/>
            <person name="Greenberg D."/>
            <person name="Roy A."/>
            <person name="Foley K."/>
            <person name="Naylor J."/>
            <person name="Stange-Thomann N."/>
            <person name="Barrett R."/>
            <person name="Gnerre S."/>
            <person name="Kamal M."/>
            <person name="Kamvysselis M."/>
            <person name="Mauceli E.W."/>
            <person name="Bielke C."/>
            <person name="Rudd S."/>
            <person name="Frishman D."/>
            <person name="Krystofova S."/>
            <person name="Rasmussen C."/>
            <person name="Metzenberg R.L."/>
            <person name="Perkins D.D."/>
            <person name="Kroken S."/>
            <person name="Cogoni C."/>
            <person name="Macino G."/>
            <person name="Catcheside D.E.A."/>
            <person name="Li W."/>
            <person name="Pratt R.J."/>
            <person name="Osmani S.A."/>
            <person name="DeSouza C.P.C."/>
            <person name="Glass N.L."/>
            <person name="Orbach M.J."/>
            <person name="Berglund J.A."/>
            <person name="Voelker R."/>
            <person name="Yarden O."/>
            <person name="Plamann M."/>
            <person name="Seiler S."/>
            <person name="Dunlap J.C."/>
            <person name="Radford A."/>
            <person name="Aramayo R."/>
            <person name="Natvig D.O."/>
            <person name="Alex L.A."/>
            <person name="Mannhaupt G."/>
            <person name="Ebbole D.J."/>
            <person name="Freitag M."/>
            <person name="Paulsen I."/>
            <person name="Sachs M.S."/>
            <person name="Lander E.S."/>
            <person name="Nusbaum C."/>
            <person name="Birren B.W."/>
        </authorList>
    </citation>
    <scope>NUCLEOTIDE SEQUENCE [LARGE SCALE GENOMIC DNA]</scope>
    <source>
        <strain>ATCC 24698 / 74-OR23-1A / CBS 708.71 / DSM 1257 / FGSC 987</strain>
    </source>
</reference>
<dbReference type="EC" id="3.6.4.12"/>
<dbReference type="EMBL" id="AL669989">
    <property type="protein sequence ID" value="CAD21100.1"/>
    <property type="molecule type" value="Genomic_DNA"/>
</dbReference>
<dbReference type="EMBL" id="CM002237">
    <property type="protein sequence ID" value="EAA26533.1"/>
    <property type="molecule type" value="Genomic_DNA"/>
</dbReference>
<dbReference type="RefSeq" id="XP_955769.1">
    <property type="nucleotide sequence ID" value="XM_950676.2"/>
</dbReference>
<dbReference type="SMR" id="Q8WZS3"/>
<dbReference type="FunCoup" id="Q8WZS3">
    <property type="interactions" value="1387"/>
</dbReference>
<dbReference type="STRING" id="367110.Q8WZS3"/>
<dbReference type="PaxDb" id="5141-EFNCRP00000002514"/>
<dbReference type="EnsemblFungi" id="EAA26533">
    <property type="protein sequence ID" value="EAA26533"/>
    <property type="gene ID" value="NCU03482"/>
</dbReference>
<dbReference type="GeneID" id="3871916"/>
<dbReference type="KEGG" id="ncr:NCU03482"/>
<dbReference type="VEuPathDB" id="FungiDB:NCU03482"/>
<dbReference type="HOGENOM" id="CLU_028311_1_1_1"/>
<dbReference type="InParanoid" id="Q8WZS3"/>
<dbReference type="OMA" id="RTLPYNK"/>
<dbReference type="OrthoDB" id="10060499at2759"/>
<dbReference type="Proteomes" id="UP000001805">
    <property type="component" value="Chromosome 6, Linkage Group II"/>
</dbReference>
<dbReference type="GO" id="GO:0031011">
    <property type="term" value="C:Ino80 complex"/>
    <property type="evidence" value="ECO:0000318"/>
    <property type="project" value="GO_Central"/>
</dbReference>
<dbReference type="GO" id="GO:0035267">
    <property type="term" value="C:NuA4 histone acetyltransferase complex"/>
    <property type="evidence" value="ECO:0000318"/>
    <property type="project" value="GO_Central"/>
</dbReference>
<dbReference type="GO" id="GO:0097255">
    <property type="term" value="C:R2TP complex"/>
    <property type="evidence" value="ECO:0000318"/>
    <property type="project" value="GO_Central"/>
</dbReference>
<dbReference type="GO" id="GO:0000812">
    <property type="term" value="C:Swr1 complex"/>
    <property type="evidence" value="ECO:0000318"/>
    <property type="project" value="GO_Central"/>
</dbReference>
<dbReference type="GO" id="GO:0043138">
    <property type="term" value="F:3'-5' DNA helicase activity"/>
    <property type="evidence" value="ECO:0007669"/>
    <property type="project" value="EnsemblFungi"/>
</dbReference>
<dbReference type="GO" id="GO:0043139">
    <property type="term" value="F:5'-3' DNA helicase activity"/>
    <property type="evidence" value="ECO:0007669"/>
    <property type="project" value="EnsemblFungi"/>
</dbReference>
<dbReference type="GO" id="GO:0005524">
    <property type="term" value="F:ATP binding"/>
    <property type="evidence" value="ECO:0007669"/>
    <property type="project" value="UniProtKB-KW"/>
</dbReference>
<dbReference type="GO" id="GO:0016887">
    <property type="term" value="F:ATP hydrolysis activity"/>
    <property type="evidence" value="ECO:0007669"/>
    <property type="project" value="InterPro"/>
</dbReference>
<dbReference type="GO" id="GO:0003678">
    <property type="term" value="F:DNA helicase activity"/>
    <property type="evidence" value="ECO:0000318"/>
    <property type="project" value="GO_Central"/>
</dbReference>
<dbReference type="GO" id="GO:0000492">
    <property type="term" value="P:box C/D snoRNP assembly"/>
    <property type="evidence" value="ECO:0000318"/>
    <property type="project" value="GO_Central"/>
</dbReference>
<dbReference type="GO" id="GO:0006338">
    <property type="term" value="P:chromatin remodeling"/>
    <property type="evidence" value="ECO:0000318"/>
    <property type="project" value="GO_Central"/>
</dbReference>
<dbReference type="GO" id="GO:0006281">
    <property type="term" value="P:DNA repair"/>
    <property type="evidence" value="ECO:0007669"/>
    <property type="project" value="UniProtKB-KW"/>
</dbReference>
<dbReference type="GO" id="GO:0006357">
    <property type="term" value="P:regulation of transcription by RNA polymerase II"/>
    <property type="evidence" value="ECO:0000318"/>
    <property type="project" value="GO_Central"/>
</dbReference>
<dbReference type="FunFam" id="1.10.8.60:FF:000010">
    <property type="entry name" value="RuvB-like helicase"/>
    <property type="match status" value="1"/>
</dbReference>
<dbReference type="FunFam" id="2.40.50.360:FF:000001">
    <property type="entry name" value="RuvB-like helicase"/>
    <property type="match status" value="1"/>
</dbReference>
<dbReference type="Gene3D" id="1.10.8.60">
    <property type="match status" value="1"/>
</dbReference>
<dbReference type="Gene3D" id="3.40.50.300">
    <property type="entry name" value="P-loop containing nucleotide triphosphate hydrolases"/>
    <property type="match status" value="1"/>
</dbReference>
<dbReference type="Gene3D" id="2.40.50.360">
    <property type="entry name" value="RuvB-like helicase, domain II"/>
    <property type="match status" value="1"/>
</dbReference>
<dbReference type="InterPro" id="IPR003593">
    <property type="entry name" value="AAA+_ATPase"/>
</dbReference>
<dbReference type="InterPro" id="IPR027417">
    <property type="entry name" value="P-loop_NTPase"/>
</dbReference>
<dbReference type="InterPro" id="IPR027238">
    <property type="entry name" value="RuvB-like"/>
</dbReference>
<dbReference type="InterPro" id="IPR041048">
    <property type="entry name" value="RuvB-like_C"/>
</dbReference>
<dbReference type="InterPro" id="IPR042487">
    <property type="entry name" value="RuvBL1/2_DNA/RNA_bd_dom"/>
</dbReference>
<dbReference type="InterPro" id="IPR010339">
    <property type="entry name" value="TIP49_P-loop"/>
</dbReference>
<dbReference type="PANTHER" id="PTHR11093">
    <property type="entry name" value="RUVB-RELATED REPTIN AND PONTIN"/>
    <property type="match status" value="1"/>
</dbReference>
<dbReference type="Pfam" id="PF06068">
    <property type="entry name" value="TIP49"/>
    <property type="match status" value="1"/>
</dbReference>
<dbReference type="Pfam" id="PF17856">
    <property type="entry name" value="TIP49_C"/>
    <property type="match status" value="1"/>
</dbReference>
<dbReference type="SMART" id="SM00382">
    <property type="entry name" value="AAA"/>
    <property type="match status" value="1"/>
</dbReference>
<dbReference type="SUPFAM" id="SSF52540">
    <property type="entry name" value="P-loop containing nucleoside triphosphate hydrolases"/>
    <property type="match status" value="1"/>
</dbReference>